<sequence length="371" mass="40347">MAHRVLLLLSLASAAAVAAAVDAEDPLIRQVVPGGDDNDLELNAESHFLSFVQRFGKSYKDADEHAYRLSVFKDNLRRARRHQLLDPSAEHGVTKFSDLTPAEFRRTYLGLRKSRRALLRELGESAHEAPVLPTDGLPDDFDWRDHGAVGPVKNQGSCGSCWSFSASGALEGAHYLATGKLEVLSEQQFVDCDHECDSSEPDSCDSGCNGGLMTTAFSYLQKAGGLESEKDYPYTGSDGKCKFDKSKIVASVQNFSVVSVDEAQISANLIKHGPLAIGINAAYMQTYIGGVSCPYICGRHLDHGVLLVGYGASGFAPIRLKDKPYWIIKNSWGENWGENGYYKICRGSNVRNKCGVDSMVSTVSAVHASKE</sequence>
<gene>
    <name type="primary">CCP1</name>
</gene>
<name>CYSP1_MAIZE</name>
<reference key="1">
    <citation type="journal article" date="1995" name="Biochim. Biophys. Acta">
        <title>Isolation and characterization of two distinct cDNA clones encoding corn seed cysteine proteinases.</title>
        <authorList>
            <person name="Domoto C."/>
            <person name="Watanabe H."/>
            <person name="Abe M."/>
            <person name="Abe K."/>
            <person name="Arai S."/>
        </authorList>
    </citation>
    <scope>NUCLEOTIDE SEQUENCE [MRNA]</scope>
</reference>
<reference key="2">
    <citation type="journal article" date="1995" name="Plant Mol. Biol.">
        <title>Molecular cloning and characterization of six cDNAs expressed during glucose starvation in excised maize (Zea mays L.) root tips.</title>
        <authorList>
            <person name="Chevalier C."/>
            <person name="Bourgeois E."/>
            <person name="Pradet A."/>
            <person name="Raymond P."/>
        </authorList>
    </citation>
    <scope>NUCLEOTIDE SEQUENCE [MRNA] OF 227-371</scope>
    <source>
        <strain>cv. DEA</strain>
        <tissue>Root meristem</tissue>
    </source>
</reference>
<keyword id="KW-1015">Disulfide bond</keyword>
<keyword id="KW-0325">Glycoprotein</keyword>
<keyword id="KW-0378">Hydrolase</keyword>
<keyword id="KW-0645">Protease</keyword>
<keyword id="KW-1185">Reference proteome</keyword>
<keyword id="KW-0732">Signal</keyword>
<keyword id="KW-0788">Thiol protease</keyword>
<keyword id="KW-0865">Zymogen</keyword>
<accession>Q10716</accession>
<organism>
    <name type="scientific">Zea mays</name>
    <name type="common">Maize</name>
    <dbReference type="NCBI Taxonomy" id="4577"/>
    <lineage>
        <taxon>Eukaryota</taxon>
        <taxon>Viridiplantae</taxon>
        <taxon>Streptophyta</taxon>
        <taxon>Embryophyta</taxon>
        <taxon>Tracheophyta</taxon>
        <taxon>Spermatophyta</taxon>
        <taxon>Magnoliopsida</taxon>
        <taxon>Liliopsida</taxon>
        <taxon>Poales</taxon>
        <taxon>Poaceae</taxon>
        <taxon>PACMAD clade</taxon>
        <taxon>Panicoideae</taxon>
        <taxon>Andropogonodae</taxon>
        <taxon>Andropogoneae</taxon>
        <taxon>Tripsacinae</taxon>
        <taxon>Zea</taxon>
    </lineage>
</organism>
<protein>
    <recommendedName>
        <fullName>Cysteine proteinase 1</fullName>
        <ecNumber evidence="4">3.4.22.-</ecNumber>
    </recommendedName>
</protein>
<feature type="signal peptide" evidence="5">
    <location>
        <begin position="1"/>
        <end position="18"/>
    </location>
</feature>
<feature type="propeptide" id="PRO_0000026428" description="Activation peptide" evidence="1">
    <location>
        <begin position="19"/>
        <end position="136"/>
    </location>
</feature>
<feature type="chain" id="PRO_0000026429" description="Cysteine proteinase 1">
    <location>
        <begin position="137"/>
        <end position="371"/>
    </location>
</feature>
<feature type="active site" evidence="7">
    <location>
        <position position="161"/>
    </location>
</feature>
<feature type="active site" evidence="8">
    <location>
        <position position="303"/>
    </location>
</feature>
<feature type="active site" evidence="9">
    <location>
        <position position="330"/>
    </location>
</feature>
<feature type="glycosylation site" description="N-linked (GlcNAc...) asparagine" evidence="6">
    <location>
        <position position="254"/>
    </location>
</feature>
<feature type="disulfide bond" evidence="2">
    <location>
        <begin position="158"/>
        <end position="208"/>
    </location>
</feature>
<feature type="disulfide bond" evidence="3">
    <location>
        <begin position="192"/>
        <end position="241"/>
    </location>
</feature>
<feature type="disulfide bond" evidence="3">
    <location>
        <begin position="297"/>
        <end position="354"/>
    </location>
</feature>
<feature type="sequence conflict" description="In Ref. 2; CAA57675." evidence="10" ref="2">
    <original>L</original>
    <variation>R</variation>
    <location>
        <position position="269"/>
    </location>
</feature>
<feature type="sequence conflict" description="In Ref. 2; CAA57675." evidence="10" ref="2">
    <original>I</original>
    <variation>M</variation>
    <location>
        <position position="318"/>
    </location>
</feature>
<evidence type="ECO:0000250" key="1">
    <source>
        <dbReference type="UniProtKB" id="P00785"/>
    </source>
</evidence>
<evidence type="ECO:0000250" key="2">
    <source>
        <dbReference type="UniProtKB" id="P07858"/>
    </source>
</evidence>
<evidence type="ECO:0000250" key="3">
    <source>
        <dbReference type="UniProtKB" id="P25250"/>
    </source>
</evidence>
<evidence type="ECO:0000250" key="4">
    <source>
        <dbReference type="UniProtKB" id="P80884"/>
    </source>
</evidence>
<evidence type="ECO:0000255" key="5"/>
<evidence type="ECO:0000255" key="6">
    <source>
        <dbReference type="PROSITE-ProRule" id="PRU00498"/>
    </source>
</evidence>
<evidence type="ECO:0000255" key="7">
    <source>
        <dbReference type="PROSITE-ProRule" id="PRU10088"/>
    </source>
</evidence>
<evidence type="ECO:0000255" key="8">
    <source>
        <dbReference type="PROSITE-ProRule" id="PRU10089"/>
    </source>
</evidence>
<evidence type="ECO:0000255" key="9">
    <source>
        <dbReference type="PROSITE-ProRule" id="PRU10090"/>
    </source>
</evidence>
<evidence type="ECO:0000305" key="10"/>
<comment type="function">
    <text>Involved in the degradation of the storage protein zein. May play a role in proteolysis during emergencies.</text>
</comment>
<comment type="tissue specificity">
    <text>Expressed during the late stages of seed ripening, in mature seeds and during germination.</text>
</comment>
<comment type="similarity">
    <text evidence="7 8 9">Belongs to the peptidase C1 family.</text>
</comment>
<dbReference type="EC" id="3.4.22.-" evidence="4"/>
<dbReference type="EMBL" id="D45402">
    <property type="protein sequence ID" value="BAA08244.1"/>
    <property type="molecule type" value="mRNA"/>
</dbReference>
<dbReference type="EMBL" id="X82185">
    <property type="protein sequence ID" value="CAA57675.1"/>
    <property type="molecule type" value="mRNA"/>
</dbReference>
<dbReference type="PIR" id="S59597">
    <property type="entry name" value="S59597"/>
</dbReference>
<dbReference type="PIR" id="S60456">
    <property type="entry name" value="S60456"/>
</dbReference>
<dbReference type="RefSeq" id="NP_001105685.1">
    <property type="nucleotide sequence ID" value="NM_001112215.1"/>
</dbReference>
<dbReference type="SMR" id="Q10716"/>
<dbReference type="FunCoup" id="Q10716">
    <property type="interactions" value="761"/>
</dbReference>
<dbReference type="STRING" id="4577.Q10716"/>
<dbReference type="MEROPS" id="C01.022"/>
<dbReference type="GlyCosmos" id="Q10716">
    <property type="glycosylation" value="1 site, No reported glycans"/>
</dbReference>
<dbReference type="PaxDb" id="4577-GRMZM2G098298_P01"/>
<dbReference type="MaizeGDB" id="25431"/>
<dbReference type="eggNOG" id="KOG1542">
    <property type="taxonomic scope" value="Eukaryota"/>
</dbReference>
<dbReference type="InParanoid" id="Q10716"/>
<dbReference type="Proteomes" id="UP000007305">
    <property type="component" value="Unplaced"/>
</dbReference>
<dbReference type="ExpressionAtlas" id="Q10716">
    <property type="expression patterns" value="baseline and differential"/>
</dbReference>
<dbReference type="GO" id="GO:0005615">
    <property type="term" value="C:extracellular space"/>
    <property type="evidence" value="ECO:0000318"/>
    <property type="project" value="GO_Central"/>
</dbReference>
<dbReference type="GO" id="GO:0005764">
    <property type="term" value="C:lysosome"/>
    <property type="evidence" value="ECO:0000318"/>
    <property type="project" value="GO_Central"/>
</dbReference>
<dbReference type="GO" id="GO:0004197">
    <property type="term" value="F:cysteine-type endopeptidase activity"/>
    <property type="evidence" value="ECO:0000318"/>
    <property type="project" value="GO_Central"/>
</dbReference>
<dbReference type="GO" id="GO:0051603">
    <property type="term" value="P:proteolysis involved in protein catabolic process"/>
    <property type="evidence" value="ECO:0000318"/>
    <property type="project" value="GO_Central"/>
</dbReference>
<dbReference type="CDD" id="cd02248">
    <property type="entry name" value="Peptidase_C1A"/>
    <property type="match status" value="1"/>
</dbReference>
<dbReference type="FunFam" id="3.90.70.10:FF:000057">
    <property type="entry name" value="Cysteine protease RD19A"/>
    <property type="match status" value="1"/>
</dbReference>
<dbReference type="Gene3D" id="3.90.70.10">
    <property type="entry name" value="Cysteine proteinases"/>
    <property type="match status" value="1"/>
</dbReference>
<dbReference type="InterPro" id="IPR038765">
    <property type="entry name" value="Papain-like_cys_pep_sf"/>
</dbReference>
<dbReference type="InterPro" id="IPR025661">
    <property type="entry name" value="Pept_asp_AS"/>
</dbReference>
<dbReference type="InterPro" id="IPR000169">
    <property type="entry name" value="Pept_cys_AS"/>
</dbReference>
<dbReference type="InterPro" id="IPR025660">
    <property type="entry name" value="Pept_his_AS"/>
</dbReference>
<dbReference type="InterPro" id="IPR013128">
    <property type="entry name" value="Peptidase_C1A"/>
</dbReference>
<dbReference type="InterPro" id="IPR000668">
    <property type="entry name" value="Peptidase_C1A_C"/>
</dbReference>
<dbReference type="InterPro" id="IPR039417">
    <property type="entry name" value="Peptidase_C1A_papain-like"/>
</dbReference>
<dbReference type="InterPro" id="IPR013201">
    <property type="entry name" value="Prot_inhib_I29"/>
</dbReference>
<dbReference type="PANTHER" id="PTHR12411">
    <property type="entry name" value="CYSTEINE PROTEASE FAMILY C1-RELATED"/>
    <property type="match status" value="1"/>
</dbReference>
<dbReference type="Pfam" id="PF08246">
    <property type="entry name" value="Inhibitor_I29"/>
    <property type="match status" value="1"/>
</dbReference>
<dbReference type="Pfam" id="PF00112">
    <property type="entry name" value="Peptidase_C1"/>
    <property type="match status" value="1"/>
</dbReference>
<dbReference type="PRINTS" id="PR00705">
    <property type="entry name" value="PAPAIN"/>
</dbReference>
<dbReference type="SMART" id="SM00848">
    <property type="entry name" value="Inhibitor_I29"/>
    <property type="match status" value="1"/>
</dbReference>
<dbReference type="SMART" id="SM00645">
    <property type="entry name" value="Pept_C1"/>
    <property type="match status" value="1"/>
</dbReference>
<dbReference type="SUPFAM" id="SSF54001">
    <property type="entry name" value="Cysteine proteinases"/>
    <property type="match status" value="1"/>
</dbReference>
<dbReference type="PROSITE" id="PS00640">
    <property type="entry name" value="THIOL_PROTEASE_ASN"/>
    <property type="match status" value="1"/>
</dbReference>
<dbReference type="PROSITE" id="PS00139">
    <property type="entry name" value="THIOL_PROTEASE_CYS"/>
    <property type="match status" value="1"/>
</dbReference>
<dbReference type="PROSITE" id="PS00639">
    <property type="entry name" value="THIOL_PROTEASE_HIS"/>
    <property type="match status" value="1"/>
</dbReference>
<proteinExistence type="evidence at transcript level"/>